<organism>
    <name type="scientific">Mesorhizobium japonicum (strain LMG 29417 / CECT 9101 / MAFF 303099)</name>
    <name type="common">Mesorhizobium loti (strain MAFF 303099)</name>
    <dbReference type="NCBI Taxonomy" id="266835"/>
    <lineage>
        <taxon>Bacteria</taxon>
        <taxon>Pseudomonadati</taxon>
        <taxon>Pseudomonadota</taxon>
        <taxon>Alphaproteobacteria</taxon>
        <taxon>Hyphomicrobiales</taxon>
        <taxon>Phyllobacteriaceae</taxon>
        <taxon>Mesorhizobium</taxon>
    </lineage>
</organism>
<proteinExistence type="inferred from homology"/>
<feature type="signal peptide" evidence="2">
    <location>
        <begin position="1"/>
        <end position="20"/>
    </location>
</feature>
<feature type="chain" id="PRO_0000018247" description="Outer membrane lipoprotein omp19 homolog">
    <location>
        <begin position="21"/>
        <end position="179"/>
    </location>
</feature>
<feature type="region of interest" description="Disordered" evidence="3">
    <location>
        <begin position="24"/>
        <end position="88"/>
    </location>
</feature>
<feature type="region of interest" description="Disordered" evidence="3">
    <location>
        <begin position="158"/>
        <end position="179"/>
    </location>
</feature>
<feature type="compositionally biased region" description="Low complexity" evidence="3">
    <location>
        <begin position="32"/>
        <end position="44"/>
    </location>
</feature>
<feature type="compositionally biased region" description="Polar residues" evidence="3">
    <location>
        <begin position="160"/>
        <end position="179"/>
    </location>
</feature>
<feature type="lipid moiety-binding region" description="N-palmitoyl cysteine" evidence="2">
    <location>
        <position position="21"/>
    </location>
</feature>
<feature type="lipid moiety-binding region" description="S-diacylglycerol cysteine" evidence="2">
    <location>
        <position position="21"/>
    </location>
</feature>
<evidence type="ECO:0000250" key="1"/>
<evidence type="ECO:0000255" key="2">
    <source>
        <dbReference type="PROSITE-ProRule" id="PRU00303"/>
    </source>
</evidence>
<evidence type="ECO:0000256" key="3">
    <source>
        <dbReference type="SAM" id="MobiDB-lite"/>
    </source>
</evidence>
<evidence type="ECO:0000305" key="4"/>
<reference key="1">
    <citation type="journal article" date="2000" name="DNA Res.">
        <title>Complete genome structure of the nitrogen-fixing symbiotic bacterium Mesorhizobium loti.</title>
        <authorList>
            <person name="Kaneko T."/>
            <person name="Nakamura Y."/>
            <person name="Sato S."/>
            <person name="Asamizu E."/>
            <person name="Kato T."/>
            <person name="Sasamoto S."/>
            <person name="Watanabe A."/>
            <person name="Idesawa K."/>
            <person name="Ishikawa A."/>
            <person name="Kawashima K."/>
            <person name="Kimura T."/>
            <person name="Kishida Y."/>
            <person name="Kiyokawa C."/>
            <person name="Kohara M."/>
            <person name="Matsumoto M."/>
            <person name="Matsuno A."/>
            <person name="Mochizuki Y."/>
            <person name="Nakayama S."/>
            <person name="Nakazaki N."/>
            <person name="Shimpo S."/>
            <person name="Sugimoto M."/>
            <person name="Takeuchi C."/>
            <person name="Yamada M."/>
            <person name="Tabata S."/>
        </authorList>
    </citation>
    <scope>NUCLEOTIDE SEQUENCE [LARGE SCALE GENOMIC DNA]</scope>
    <source>
        <strain>LMG 29417 / CECT 9101 / MAFF 303099</strain>
    </source>
</reference>
<keyword id="KW-0998">Cell outer membrane</keyword>
<keyword id="KW-0449">Lipoprotein</keyword>
<keyword id="KW-0472">Membrane</keyword>
<keyword id="KW-0564">Palmitate</keyword>
<keyword id="KW-0732">Signal</keyword>
<protein>
    <recommendedName>
        <fullName>Outer membrane lipoprotein omp19 homolog</fullName>
    </recommendedName>
</protein>
<sequence length="179" mass="17927">MNFSKSGLVAVSLAALVASGCSTSRFSSMDDQQPAPLQPAPAGQVTSNQLPPPASPGSTDPSKFPTAPANTQVASLPPDGQAPAGASDLSAAAVAGVWNASVSGQSCKIATPQTKFGAGFRAGPLHCPAPIDGIKSWNVAGKQLTLYDENGGSLARLYSSGGSKFDGQTSNGQPISLTR</sequence>
<comment type="subcellular location">
    <subcellularLocation>
        <location evidence="1">Cell outer membrane</location>
        <topology evidence="2">Lipid-anchor</topology>
    </subcellularLocation>
</comment>
<comment type="similarity">
    <text evidence="4">Belongs to the rhizobiaceae omp19 lipoprotein family.</text>
</comment>
<name>OMP19_RHILO</name>
<accession>Q98EC1</accession>
<gene>
    <name type="primary">omp19</name>
    <name type="ordered locus">mll4312</name>
</gene>
<dbReference type="EMBL" id="BA000012">
    <property type="protein sequence ID" value="BAB50999.1"/>
    <property type="molecule type" value="Genomic_DNA"/>
</dbReference>
<dbReference type="RefSeq" id="WP_010912341.1">
    <property type="nucleotide sequence ID" value="NC_002678.2"/>
</dbReference>
<dbReference type="SMR" id="Q98EC1"/>
<dbReference type="KEGG" id="mlo:mll4312"/>
<dbReference type="eggNOG" id="ENOG503363Z">
    <property type="taxonomic scope" value="Bacteria"/>
</dbReference>
<dbReference type="HOGENOM" id="CLU_103254_0_0_5"/>
<dbReference type="Proteomes" id="UP000000552">
    <property type="component" value="Chromosome"/>
</dbReference>
<dbReference type="GO" id="GO:0009279">
    <property type="term" value="C:cell outer membrane"/>
    <property type="evidence" value="ECO:0007669"/>
    <property type="project" value="UniProtKB-SubCell"/>
</dbReference>
<dbReference type="GO" id="GO:0004866">
    <property type="term" value="F:endopeptidase inhibitor activity"/>
    <property type="evidence" value="ECO:0007669"/>
    <property type="project" value="InterPro"/>
</dbReference>
<dbReference type="Gene3D" id="2.40.128.10">
    <property type="match status" value="1"/>
</dbReference>
<dbReference type="InterPro" id="IPR021140">
    <property type="entry name" value="Inh/Omp19"/>
</dbReference>
<dbReference type="InterPro" id="IPR010571">
    <property type="entry name" value="OM_lipoprot_Omp19_bac"/>
</dbReference>
<dbReference type="InterPro" id="IPR016085">
    <property type="entry name" value="Protease_inh_b-brl_dom"/>
</dbReference>
<dbReference type="Pfam" id="PF02974">
    <property type="entry name" value="Inh"/>
    <property type="match status" value="1"/>
</dbReference>
<dbReference type="PIRSF" id="PIRSF034005">
    <property type="entry name" value="OM_lipoprot_Omp19_bac"/>
    <property type="match status" value="1"/>
</dbReference>
<dbReference type="SUPFAM" id="SSF50882">
    <property type="entry name" value="beta-Barrel protease inhibitors"/>
    <property type="match status" value="1"/>
</dbReference>
<dbReference type="PROSITE" id="PS51257">
    <property type="entry name" value="PROKAR_LIPOPROTEIN"/>
    <property type="match status" value="1"/>
</dbReference>